<comment type="catalytic activity">
    <reaction evidence="1">
        <text>5-amino-1-(5-phospho-D-ribosyl)imidazole-4-carboxylate + L-aspartate + ATP = (2S)-2-[5-amino-1-(5-phospho-beta-D-ribosyl)imidazole-4-carboxamido]succinate + ADP + phosphate + 2 H(+)</text>
        <dbReference type="Rhea" id="RHEA:22628"/>
        <dbReference type="ChEBI" id="CHEBI:15378"/>
        <dbReference type="ChEBI" id="CHEBI:29991"/>
        <dbReference type="ChEBI" id="CHEBI:30616"/>
        <dbReference type="ChEBI" id="CHEBI:43474"/>
        <dbReference type="ChEBI" id="CHEBI:58443"/>
        <dbReference type="ChEBI" id="CHEBI:77657"/>
        <dbReference type="ChEBI" id="CHEBI:456216"/>
        <dbReference type="EC" id="6.3.2.6"/>
    </reaction>
</comment>
<comment type="pathway">
    <text evidence="1">Purine metabolism; IMP biosynthesis via de novo pathway; 5-amino-1-(5-phospho-D-ribosyl)imidazole-4-carboxamide from 5-amino-1-(5-phospho-D-ribosyl)imidazole-4-carboxylate: step 1/2.</text>
</comment>
<comment type="similarity">
    <text evidence="1">Belongs to the SAICAR synthetase family.</text>
</comment>
<reference key="1">
    <citation type="journal article" date="2004" name="Nucleic Acids Res.">
        <title>The genome sequence of Bacillus cereus ATCC 10987 reveals metabolic adaptations and a large plasmid related to Bacillus anthracis pXO1.</title>
        <authorList>
            <person name="Rasko D.A."/>
            <person name="Ravel J."/>
            <person name="Oekstad O.A."/>
            <person name="Helgason E."/>
            <person name="Cer R.Z."/>
            <person name="Jiang L."/>
            <person name="Shores K.A."/>
            <person name="Fouts D.E."/>
            <person name="Tourasse N.J."/>
            <person name="Angiuoli S.V."/>
            <person name="Kolonay J.F."/>
            <person name="Nelson W.C."/>
            <person name="Kolstoe A.-B."/>
            <person name="Fraser C.M."/>
            <person name="Read T.D."/>
        </authorList>
    </citation>
    <scope>NUCLEOTIDE SEQUENCE [LARGE SCALE GENOMIC DNA]</scope>
    <source>
        <strain>ATCC 10987 / NRS 248</strain>
    </source>
</reference>
<organism>
    <name type="scientific">Bacillus cereus (strain ATCC 10987 / NRS 248)</name>
    <dbReference type="NCBI Taxonomy" id="222523"/>
    <lineage>
        <taxon>Bacteria</taxon>
        <taxon>Bacillati</taxon>
        <taxon>Bacillota</taxon>
        <taxon>Bacilli</taxon>
        <taxon>Bacillales</taxon>
        <taxon>Bacillaceae</taxon>
        <taxon>Bacillus</taxon>
        <taxon>Bacillus cereus group</taxon>
    </lineage>
</organism>
<protein>
    <recommendedName>
        <fullName evidence="1">Phosphoribosylaminoimidazole-succinocarboxamide synthase</fullName>
        <ecNumber evidence="1">6.3.2.6</ecNumber>
    </recommendedName>
    <alternativeName>
        <fullName evidence="1">SAICAR synthetase</fullName>
    </alternativeName>
</protein>
<feature type="chain" id="PRO_1000018665" description="Phosphoribosylaminoimidazole-succinocarboxamide synthase">
    <location>
        <begin position="1"/>
        <end position="239"/>
    </location>
</feature>
<evidence type="ECO:0000255" key="1">
    <source>
        <dbReference type="HAMAP-Rule" id="MF_00137"/>
    </source>
</evidence>
<sequence>MQKLELLYEGKAKRIYRTESADMVWVEYKDSATAFNGEKKETITGKGRLNNEITTLLFRKLQEVGIKTHFVEKLSETEQLVKKVSIIPLEVVTRNVIAGSLSKRLGMEEGTVLAEPIVEFYFKDDDLGDPLVTEDHIRVLNVASPEQVSVLRDMALQINQVLIDHFASCRVRLVDFKLEFGVTDEGEIILADEISPDTCRLWDETSNEKFDKDVFRRDLGNLTDAYEEILKRLGGISHV</sequence>
<gene>
    <name evidence="1" type="primary">purC</name>
    <name type="ordered locus">BCE_0320</name>
</gene>
<proteinExistence type="inferred from homology"/>
<dbReference type="EC" id="6.3.2.6" evidence="1"/>
<dbReference type="EMBL" id="AE017194">
    <property type="protein sequence ID" value="AAS39256.1"/>
    <property type="molecule type" value="Genomic_DNA"/>
</dbReference>
<dbReference type="SMR" id="Q73EN8"/>
<dbReference type="KEGG" id="bca:BCE_0320"/>
<dbReference type="HOGENOM" id="CLU_061495_2_0_9"/>
<dbReference type="UniPathway" id="UPA00074">
    <property type="reaction ID" value="UER00131"/>
</dbReference>
<dbReference type="Proteomes" id="UP000002527">
    <property type="component" value="Chromosome"/>
</dbReference>
<dbReference type="GO" id="GO:0005524">
    <property type="term" value="F:ATP binding"/>
    <property type="evidence" value="ECO:0007669"/>
    <property type="project" value="UniProtKB-KW"/>
</dbReference>
<dbReference type="GO" id="GO:0004639">
    <property type="term" value="F:phosphoribosylaminoimidazolesuccinocarboxamide synthase activity"/>
    <property type="evidence" value="ECO:0007669"/>
    <property type="project" value="UniProtKB-UniRule"/>
</dbReference>
<dbReference type="GO" id="GO:0006189">
    <property type="term" value="P:'de novo' IMP biosynthetic process"/>
    <property type="evidence" value="ECO:0007669"/>
    <property type="project" value="UniProtKB-UniRule"/>
</dbReference>
<dbReference type="GO" id="GO:0009236">
    <property type="term" value="P:cobalamin biosynthetic process"/>
    <property type="evidence" value="ECO:0007669"/>
    <property type="project" value="InterPro"/>
</dbReference>
<dbReference type="CDD" id="cd01415">
    <property type="entry name" value="SAICAR_synt_PurC"/>
    <property type="match status" value="1"/>
</dbReference>
<dbReference type="FunFam" id="3.30.200.20:FF:000189">
    <property type="entry name" value="Phosphoribosylaminoimidazole-succinocarboxamide synthase"/>
    <property type="match status" value="1"/>
</dbReference>
<dbReference type="FunFam" id="3.30.470.20:FF:000006">
    <property type="entry name" value="Phosphoribosylaminoimidazole-succinocarboxamide synthase"/>
    <property type="match status" value="1"/>
</dbReference>
<dbReference type="Gene3D" id="3.30.470.20">
    <property type="entry name" value="ATP-grasp fold, B domain"/>
    <property type="match status" value="1"/>
</dbReference>
<dbReference type="Gene3D" id="3.30.200.20">
    <property type="entry name" value="Phosphorylase Kinase, domain 1"/>
    <property type="match status" value="1"/>
</dbReference>
<dbReference type="HAMAP" id="MF_00137">
    <property type="entry name" value="SAICAR_synth"/>
    <property type="match status" value="1"/>
</dbReference>
<dbReference type="InterPro" id="IPR028923">
    <property type="entry name" value="SAICAR_synt/ADE2_N"/>
</dbReference>
<dbReference type="InterPro" id="IPR033934">
    <property type="entry name" value="SAICAR_synt_PurC"/>
</dbReference>
<dbReference type="InterPro" id="IPR001636">
    <property type="entry name" value="SAICAR_synth"/>
</dbReference>
<dbReference type="InterPro" id="IPR050089">
    <property type="entry name" value="SAICAR_synthetase"/>
</dbReference>
<dbReference type="InterPro" id="IPR018236">
    <property type="entry name" value="SAICAR_synthetase_CS"/>
</dbReference>
<dbReference type="NCBIfam" id="TIGR00081">
    <property type="entry name" value="purC"/>
    <property type="match status" value="1"/>
</dbReference>
<dbReference type="PANTHER" id="PTHR43599">
    <property type="entry name" value="MULTIFUNCTIONAL PROTEIN ADE2"/>
    <property type="match status" value="1"/>
</dbReference>
<dbReference type="PANTHER" id="PTHR43599:SF3">
    <property type="entry name" value="SI:DKEY-6E2.2"/>
    <property type="match status" value="1"/>
</dbReference>
<dbReference type="Pfam" id="PF01259">
    <property type="entry name" value="SAICAR_synt"/>
    <property type="match status" value="1"/>
</dbReference>
<dbReference type="SUPFAM" id="SSF56104">
    <property type="entry name" value="SAICAR synthase-like"/>
    <property type="match status" value="1"/>
</dbReference>
<dbReference type="PROSITE" id="PS01057">
    <property type="entry name" value="SAICAR_SYNTHETASE_1"/>
    <property type="match status" value="1"/>
</dbReference>
<dbReference type="PROSITE" id="PS01058">
    <property type="entry name" value="SAICAR_SYNTHETASE_2"/>
    <property type="match status" value="1"/>
</dbReference>
<name>PUR7_BACC1</name>
<keyword id="KW-0067">ATP-binding</keyword>
<keyword id="KW-0436">Ligase</keyword>
<keyword id="KW-0547">Nucleotide-binding</keyword>
<keyword id="KW-0658">Purine biosynthesis</keyword>
<accession>Q73EN8</accession>